<accession>Q55DQ4</accession>
<reference key="1">
    <citation type="journal article" date="2005" name="Nature">
        <title>The genome of the social amoeba Dictyostelium discoideum.</title>
        <authorList>
            <person name="Eichinger L."/>
            <person name="Pachebat J.A."/>
            <person name="Gloeckner G."/>
            <person name="Rajandream M.A."/>
            <person name="Sucgang R."/>
            <person name="Berriman M."/>
            <person name="Song J."/>
            <person name="Olsen R."/>
            <person name="Szafranski K."/>
            <person name="Xu Q."/>
            <person name="Tunggal B."/>
            <person name="Kummerfeld S."/>
            <person name="Madera M."/>
            <person name="Konfortov B.A."/>
            <person name="Rivero F."/>
            <person name="Bankier A.T."/>
            <person name="Lehmann R."/>
            <person name="Hamlin N."/>
            <person name="Davies R."/>
            <person name="Gaudet P."/>
            <person name="Fey P."/>
            <person name="Pilcher K."/>
            <person name="Chen G."/>
            <person name="Saunders D."/>
            <person name="Sodergren E.J."/>
            <person name="Davis P."/>
            <person name="Kerhornou A."/>
            <person name="Nie X."/>
            <person name="Hall N."/>
            <person name="Anjard C."/>
            <person name="Hemphill L."/>
            <person name="Bason N."/>
            <person name="Farbrother P."/>
            <person name="Desany B."/>
            <person name="Just E."/>
            <person name="Morio T."/>
            <person name="Rost R."/>
            <person name="Churcher C.M."/>
            <person name="Cooper J."/>
            <person name="Haydock S."/>
            <person name="van Driessche N."/>
            <person name="Cronin A."/>
            <person name="Goodhead I."/>
            <person name="Muzny D.M."/>
            <person name="Mourier T."/>
            <person name="Pain A."/>
            <person name="Lu M."/>
            <person name="Harper D."/>
            <person name="Lindsay R."/>
            <person name="Hauser H."/>
            <person name="James K.D."/>
            <person name="Quiles M."/>
            <person name="Madan Babu M."/>
            <person name="Saito T."/>
            <person name="Buchrieser C."/>
            <person name="Wardroper A."/>
            <person name="Felder M."/>
            <person name="Thangavelu M."/>
            <person name="Johnson D."/>
            <person name="Knights A."/>
            <person name="Loulseged H."/>
            <person name="Mungall K.L."/>
            <person name="Oliver K."/>
            <person name="Price C."/>
            <person name="Quail M.A."/>
            <person name="Urushihara H."/>
            <person name="Hernandez J."/>
            <person name="Rabbinowitsch E."/>
            <person name="Steffen D."/>
            <person name="Sanders M."/>
            <person name="Ma J."/>
            <person name="Kohara Y."/>
            <person name="Sharp S."/>
            <person name="Simmonds M.N."/>
            <person name="Spiegler S."/>
            <person name="Tivey A."/>
            <person name="Sugano S."/>
            <person name="White B."/>
            <person name="Walker D."/>
            <person name="Woodward J.R."/>
            <person name="Winckler T."/>
            <person name="Tanaka Y."/>
            <person name="Shaulsky G."/>
            <person name="Schleicher M."/>
            <person name="Weinstock G.M."/>
            <person name="Rosenthal A."/>
            <person name="Cox E.C."/>
            <person name="Chisholm R.L."/>
            <person name="Gibbs R.A."/>
            <person name="Loomis W.F."/>
            <person name="Platzer M."/>
            <person name="Kay R.R."/>
            <person name="Williams J.G."/>
            <person name="Dear P.H."/>
            <person name="Noegel A.A."/>
            <person name="Barrell B.G."/>
            <person name="Kuspa A."/>
        </authorList>
    </citation>
    <scope>NUCLEOTIDE SEQUENCE [LARGE SCALE GENOMIC DNA]</scope>
    <source>
        <strain>AX4</strain>
    </source>
</reference>
<evidence type="ECO:0000250" key="1"/>
<evidence type="ECO:0000255" key="2"/>
<evidence type="ECO:0000305" key="3"/>
<keyword id="KW-0175">Coiled coil</keyword>
<keyword id="KW-0637">Prenyltransferase</keyword>
<keyword id="KW-1185">Reference proteome</keyword>
<keyword id="KW-0677">Repeat</keyword>
<keyword id="KW-0808">Transferase</keyword>
<name>PGTA_DICDI</name>
<feature type="chain" id="PRO_0000331287" description="Geranylgeranyl transferase type-2 subunit alpha">
    <location>
        <begin position="1"/>
        <end position="311"/>
    </location>
</feature>
<feature type="repeat" description="PFTA 1">
    <location>
        <begin position="49"/>
        <end position="82"/>
    </location>
</feature>
<feature type="repeat" description="PFTA 2">
    <location>
        <begin position="93"/>
        <end position="126"/>
    </location>
</feature>
<feature type="repeat" description="PFTA 3">
    <location>
        <begin position="129"/>
        <end position="162"/>
    </location>
</feature>
<feature type="repeat" description="PFTA 4">
    <location>
        <begin position="164"/>
        <end position="197"/>
    </location>
</feature>
<feature type="repeat" description="PFTA 5">
    <location>
        <begin position="206"/>
        <end position="239"/>
    </location>
</feature>
<feature type="coiled-coil region" evidence="2">
    <location>
        <begin position="12"/>
        <end position="43"/>
    </location>
</feature>
<organism>
    <name type="scientific">Dictyostelium discoideum</name>
    <name type="common">Social amoeba</name>
    <dbReference type="NCBI Taxonomy" id="44689"/>
    <lineage>
        <taxon>Eukaryota</taxon>
        <taxon>Amoebozoa</taxon>
        <taxon>Evosea</taxon>
        <taxon>Eumycetozoa</taxon>
        <taxon>Dictyostelia</taxon>
        <taxon>Dictyosteliales</taxon>
        <taxon>Dictyosteliaceae</taxon>
        <taxon>Dictyostelium</taxon>
    </lineage>
</organism>
<proteinExistence type="inferred from homology"/>
<comment type="function">
    <text evidence="1">Catalyzes the transfer of a geranylgeranyl moiety from geranylgeranyl diphosphate to proteins with a C-terminal sequence motif -XCC or -XCXC, where both cysteines may become modified.</text>
</comment>
<comment type="catalytic activity">
    <reaction>
        <text>geranylgeranyl diphosphate + L-cysteinyl-[protein] = S-geranylgeranyl-L-cysteinyl-[protein] + diphosphate</text>
        <dbReference type="Rhea" id="RHEA:21240"/>
        <dbReference type="Rhea" id="RHEA-COMP:10131"/>
        <dbReference type="Rhea" id="RHEA-COMP:11537"/>
        <dbReference type="ChEBI" id="CHEBI:29950"/>
        <dbReference type="ChEBI" id="CHEBI:33019"/>
        <dbReference type="ChEBI" id="CHEBI:57533"/>
        <dbReference type="ChEBI" id="CHEBI:86021"/>
        <dbReference type="EC" id="2.5.1.60"/>
    </reaction>
</comment>
<comment type="subunit">
    <text evidence="1">Heterodimer of an alpha and a beta subunit.</text>
</comment>
<comment type="similarity">
    <text evidence="3">Belongs to the protein prenyltransferase subunit alpha family.</text>
</comment>
<gene>
    <name type="primary">rabggta</name>
    <name type="ORF">DDB_G0269570</name>
</gene>
<protein>
    <recommendedName>
        <fullName>Geranylgeranyl transferase type-2 subunit alpha</fullName>
        <ecNumber>2.5.1.60</ecNumber>
    </recommendedName>
    <alternativeName>
        <fullName>GGTase-II-alpha</fullName>
    </alternativeName>
    <alternativeName>
        <fullName>Geranylgeranyl transferase type II subunit alpha</fullName>
    </alternativeName>
    <alternativeName>
        <fullName>PGGT</fullName>
    </alternativeName>
    <alternativeName>
        <fullName>Type II protein geranyl-geranyltransferase subunit alpha</fullName>
    </alternativeName>
</protein>
<dbReference type="EC" id="2.5.1.60"/>
<dbReference type="EMBL" id="AAFI02000005">
    <property type="protein sequence ID" value="EAL72135.2"/>
    <property type="molecule type" value="Genomic_DNA"/>
</dbReference>
<dbReference type="RefSeq" id="XP_646077.2">
    <property type="nucleotide sequence ID" value="XM_640985.2"/>
</dbReference>
<dbReference type="SMR" id="Q55DQ4"/>
<dbReference type="FunCoup" id="Q55DQ4">
    <property type="interactions" value="103"/>
</dbReference>
<dbReference type="STRING" id="44689.Q55DQ4"/>
<dbReference type="PaxDb" id="44689-DDB0233950"/>
<dbReference type="EnsemblProtists" id="EAL72135">
    <property type="protein sequence ID" value="EAL72135"/>
    <property type="gene ID" value="DDB_G0269570"/>
</dbReference>
<dbReference type="GeneID" id="8617027"/>
<dbReference type="KEGG" id="ddi:DDB_G0269570"/>
<dbReference type="dictyBase" id="DDB_G0269570">
    <property type="gene designation" value="rabggta"/>
</dbReference>
<dbReference type="VEuPathDB" id="AmoebaDB:DDB_G0269570"/>
<dbReference type="eggNOG" id="KOG0529">
    <property type="taxonomic scope" value="Eukaryota"/>
</dbReference>
<dbReference type="HOGENOM" id="CLU_031996_0_0_1"/>
<dbReference type="InParanoid" id="Q55DQ4"/>
<dbReference type="OMA" id="RKFPKCY"/>
<dbReference type="PhylomeDB" id="Q55DQ4"/>
<dbReference type="Reactome" id="R-DDI-6803205">
    <property type="pathway name" value="TP53 regulates transcription of several additional cell death genes whose specific roles in p53-dependent apoptosis remain uncertain"/>
</dbReference>
<dbReference type="Reactome" id="R-DDI-8873719">
    <property type="pathway name" value="RAB geranylgeranylation"/>
</dbReference>
<dbReference type="PRO" id="PR:Q55DQ4"/>
<dbReference type="Proteomes" id="UP000002195">
    <property type="component" value="Chromosome 1"/>
</dbReference>
<dbReference type="GO" id="GO:0005737">
    <property type="term" value="C:cytoplasm"/>
    <property type="evidence" value="ECO:0000318"/>
    <property type="project" value="GO_Central"/>
</dbReference>
<dbReference type="GO" id="GO:0005968">
    <property type="term" value="C:Rab-protein geranylgeranyltransferase complex"/>
    <property type="evidence" value="ECO:0000250"/>
    <property type="project" value="UniProtKB"/>
</dbReference>
<dbReference type="GO" id="GO:0004663">
    <property type="term" value="F:Rab geranylgeranyltransferase activity"/>
    <property type="evidence" value="ECO:0000250"/>
    <property type="project" value="UniProtKB"/>
</dbReference>
<dbReference type="GO" id="GO:0031267">
    <property type="term" value="F:small GTPase binding"/>
    <property type="evidence" value="ECO:0000250"/>
    <property type="project" value="UniProtKB"/>
</dbReference>
<dbReference type="GO" id="GO:0006888">
    <property type="term" value="P:endoplasmic reticulum to Golgi vesicle-mediated transport"/>
    <property type="evidence" value="ECO:0000318"/>
    <property type="project" value="GO_Central"/>
</dbReference>
<dbReference type="GO" id="GO:0018344">
    <property type="term" value="P:protein geranylgeranylation"/>
    <property type="evidence" value="ECO:0000250"/>
    <property type="project" value="UniProtKB"/>
</dbReference>
<dbReference type="FunFam" id="1.25.40.120:FF:000042">
    <property type="entry name" value="Geranylgeranyl transferase type-2 subunit alpha"/>
    <property type="match status" value="1"/>
</dbReference>
<dbReference type="Gene3D" id="1.25.40.120">
    <property type="entry name" value="Protein prenylyltransferase"/>
    <property type="match status" value="1"/>
</dbReference>
<dbReference type="InterPro" id="IPR002088">
    <property type="entry name" value="Prenyl_trans_a"/>
</dbReference>
<dbReference type="PANTHER" id="PTHR11129:SF2">
    <property type="entry name" value="GERANYLGERANYL TRANSFERASE TYPE-2 SUBUNIT ALPHA"/>
    <property type="match status" value="1"/>
</dbReference>
<dbReference type="PANTHER" id="PTHR11129">
    <property type="entry name" value="PROTEIN FARNESYLTRANSFERASE ALPHA SUBUNIT/RAB GERANYLGERANYL TRANSFERASE ALPHA SUBUNIT"/>
    <property type="match status" value="1"/>
</dbReference>
<dbReference type="Pfam" id="PF01239">
    <property type="entry name" value="PPTA"/>
    <property type="match status" value="5"/>
</dbReference>
<dbReference type="SUPFAM" id="SSF48439">
    <property type="entry name" value="Protein prenylyltransferase"/>
    <property type="match status" value="1"/>
</dbReference>
<dbReference type="PROSITE" id="PS51147">
    <property type="entry name" value="PFTA"/>
    <property type="match status" value="5"/>
</dbReference>
<sequence>MHGVLKVRTSEEKAKAQRLKELEKIESYNKLVKSFEELREKQNGRYDEISLSVSKLVLIENPEFYTIWNYRRLAILQFTETKENSELQVIYQNEMKFLEECIQRFTKSYWIWFHRQWIALRMDNCDWEREMKLCTKLLNFDLRNFHCWGHRRFILKHSNIKLEDELKYTTEKVEQNFSNYSAWHQRSSILPKIYKEPEQLLEKILEEFELVRNAVYTEPKDSSSWIYHKWLVATIKSIPNSNYIEVLKNELTQIYDLIELEPDCKWPIYTTLLLKIEIGGFEKQELLDIISQLIKLDPDHKNYYKSLETKI</sequence>